<organism>
    <name type="scientific">Buxus microphylla</name>
    <name type="common">Littleleaf boxwood</name>
    <name type="synonym">Japanese boxwood</name>
    <dbReference type="NCBI Taxonomy" id="153571"/>
    <lineage>
        <taxon>Eukaryota</taxon>
        <taxon>Viridiplantae</taxon>
        <taxon>Streptophyta</taxon>
        <taxon>Embryophyta</taxon>
        <taxon>Tracheophyta</taxon>
        <taxon>Spermatophyta</taxon>
        <taxon>Magnoliopsida</taxon>
        <taxon>Buxales</taxon>
        <taxon>Buxaceae</taxon>
        <taxon>Buxus</taxon>
    </lineage>
</organism>
<gene>
    <name evidence="1" type="primary">rps14</name>
</gene>
<reference key="1">
    <citation type="journal article" date="2007" name="Mol. Phylogenet. Evol.">
        <title>Phylogenetic and evolutionary implications of complete chloroplast genome sequences of four early-diverging angiosperms: Buxus (Buxaceae), Chloranthus (Chloranthaceae), Dioscorea (Dioscoreaceae), and Illicium (Schisandraceae).</title>
        <authorList>
            <person name="Hansen D.R."/>
            <person name="Dastidar S.G."/>
            <person name="Cai Z."/>
            <person name="Penaflor C."/>
            <person name="Kuehl J.V."/>
            <person name="Boore J.L."/>
            <person name="Jansen R.K."/>
        </authorList>
    </citation>
    <scope>NUCLEOTIDE SEQUENCE [LARGE SCALE GENOMIC DNA]</scope>
</reference>
<reference key="2">
    <citation type="submission" date="2007-01" db="EMBL/GenBank/DDBJ databases">
        <authorList>
            <person name="Hansen D.R."/>
            <person name="Jansen R.K."/>
        </authorList>
    </citation>
    <scope>NUCLEOTIDE SEQUENCE</scope>
</reference>
<sequence>MARKSLIQREKKRKKLEQKYHLIRRSSKKEISKVPSLSDKWEIHGKLQSPPRNSAPTRLHRRCFSTGRPRANYRDFGLSGHILREMVHACLLPGATRSSW</sequence>
<name>RR14_BUXMI</name>
<proteinExistence type="inferred from homology"/>
<dbReference type="EMBL" id="EF380351">
    <property type="protein sequence ID" value="ABQ45247.1"/>
    <property type="molecule type" value="Genomic_DNA"/>
</dbReference>
<dbReference type="RefSeq" id="YP_001294182.1">
    <property type="nucleotide sequence ID" value="NC_009599.1"/>
</dbReference>
<dbReference type="SMR" id="A6MM34"/>
<dbReference type="GeneID" id="5236915"/>
<dbReference type="GO" id="GO:0009507">
    <property type="term" value="C:chloroplast"/>
    <property type="evidence" value="ECO:0007669"/>
    <property type="project" value="UniProtKB-SubCell"/>
</dbReference>
<dbReference type="GO" id="GO:0015935">
    <property type="term" value="C:small ribosomal subunit"/>
    <property type="evidence" value="ECO:0007669"/>
    <property type="project" value="TreeGrafter"/>
</dbReference>
<dbReference type="GO" id="GO:0019843">
    <property type="term" value="F:rRNA binding"/>
    <property type="evidence" value="ECO:0007669"/>
    <property type="project" value="UniProtKB-UniRule"/>
</dbReference>
<dbReference type="GO" id="GO:0003735">
    <property type="term" value="F:structural constituent of ribosome"/>
    <property type="evidence" value="ECO:0007669"/>
    <property type="project" value="InterPro"/>
</dbReference>
<dbReference type="GO" id="GO:0006412">
    <property type="term" value="P:translation"/>
    <property type="evidence" value="ECO:0007669"/>
    <property type="project" value="UniProtKB-UniRule"/>
</dbReference>
<dbReference type="FunFam" id="1.10.287.1480:FF:000001">
    <property type="entry name" value="30S ribosomal protein S14"/>
    <property type="match status" value="1"/>
</dbReference>
<dbReference type="Gene3D" id="1.10.287.1480">
    <property type="match status" value="1"/>
</dbReference>
<dbReference type="HAMAP" id="MF_00537">
    <property type="entry name" value="Ribosomal_uS14_1"/>
    <property type="match status" value="1"/>
</dbReference>
<dbReference type="InterPro" id="IPR001209">
    <property type="entry name" value="Ribosomal_uS14"/>
</dbReference>
<dbReference type="InterPro" id="IPR023036">
    <property type="entry name" value="Ribosomal_uS14_bac/plastid"/>
</dbReference>
<dbReference type="InterPro" id="IPR018271">
    <property type="entry name" value="Ribosomal_uS14_CS"/>
</dbReference>
<dbReference type="NCBIfam" id="NF006477">
    <property type="entry name" value="PRK08881.1"/>
    <property type="match status" value="1"/>
</dbReference>
<dbReference type="PANTHER" id="PTHR19836">
    <property type="entry name" value="30S RIBOSOMAL PROTEIN S14"/>
    <property type="match status" value="1"/>
</dbReference>
<dbReference type="PANTHER" id="PTHR19836:SF19">
    <property type="entry name" value="SMALL RIBOSOMAL SUBUNIT PROTEIN US14M"/>
    <property type="match status" value="1"/>
</dbReference>
<dbReference type="Pfam" id="PF00253">
    <property type="entry name" value="Ribosomal_S14"/>
    <property type="match status" value="1"/>
</dbReference>
<dbReference type="SUPFAM" id="SSF57716">
    <property type="entry name" value="Glucocorticoid receptor-like (DNA-binding domain)"/>
    <property type="match status" value="1"/>
</dbReference>
<dbReference type="PROSITE" id="PS00527">
    <property type="entry name" value="RIBOSOMAL_S14"/>
    <property type="match status" value="1"/>
</dbReference>
<evidence type="ECO:0000255" key="1">
    <source>
        <dbReference type="HAMAP-Rule" id="MF_00537"/>
    </source>
</evidence>
<evidence type="ECO:0000305" key="2"/>
<protein>
    <recommendedName>
        <fullName evidence="1">Small ribosomal subunit protein uS14c</fullName>
    </recommendedName>
    <alternativeName>
        <fullName evidence="2">30S ribosomal protein S14, chloroplastic</fullName>
    </alternativeName>
</protein>
<accession>A6MM34</accession>
<comment type="function">
    <text evidence="1">Binds 16S rRNA, required for the assembly of 30S particles.</text>
</comment>
<comment type="subunit">
    <text evidence="1">Part of the 30S ribosomal subunit.</text>
</comment>
<comment type="subcellular location">
    <subcellularLocation>
        <location>Plastid</location>
        <location>Chloroplast</location>
    </subcellularLocation>
</comment>
<comment type="similarity">
    <text evidence="1">Belongs to the universal ribosomal protein uS14 family.</text>
</comment>
<keyword id="KW-0150">Chloroplast</keyword>
<keyword id="KW-0934">Plastid</keyword>
<keyword id="KW-0687">Ribonucleoprotein</keyword>
<keyword id="KW-0689">Ribosomal protein</keyword>
<keyword id="KW-0694">RNA-binding</keyword>
<keyword id="KW-0699">rRNA-binding</keyword>
<feature type="chain" id="PRO_0000354402" description="Small ribosomal subunit protein uS14c">
    <location>
        <begin position="1"/>
        <end position="100"/>
    </location>
</feature>
<geneLocation type="chloroplast"/>